<protein>
    <recommendedName>
        <fullName>Multidrug export protein EmrA</fullName>
    </recommendedName>
</protein>
<dbReference type="EMBL" id="L42023">
    <property type="protein sequence ID" value="AAC22558.1"/>
    <property type="molecule type" value="Genomic_DNA"/>
</dbReference>
<dbReference type="PIR" id="B64101">
    <property type="entry name" value="B64101"/>
</dbReference>
<dbReference type="RefSeq" id="NP_439059.1">
    <property type="nucleotide sequence ID" value="NC_000907.1"/>
</dbReference>
<dbReference type="SMR" id="P44928"/>
<dbReference type="STRING" id="71421.HI_0898"/>
<dbReference type="EnsemblBacteria" id="AAC22558">
    <property type="protein sequence ID" value="AAC22558"/>
    <property type="gene ID" value="HI_0898"/>
</dbReference>
<dbReference type="KEGG" id="hin:HI_0898"/>
<dbReference type="PATRIC" id="fig|71421.8.peg.940"/>
<dbReference type="eggNOG" id="COG1566">
    <property type="taxonomic scope" value="Bacteria"/>
</dbReference>
<dbReference type="HOGENOM" id="CLU_018816_15_0_6"/>
<dbReference type="OrthoDB" id="9811754at2"/>
<dbReference type="PhylomeDB" id="P44928"/>
<dbReference type="BioCyc" id="HINF71421:G1GJ1-938-MONOMER"/>
<dbReference type="Proteomes" id="UP000000579">
    <property type="component" value="Chromosome"/>
</dbReference>
<dbReference type="GO" id="GO:0005886">
    <property type="term" value="C:plasma membrane"/>
    <property type="evidence" value="ECO:0000318"/>
    <property type="project" value="GO_Central"/>
</dbReference>
<dbReference type="GO" id="GO:0015125">
    <property type="term" value="F:bile acid transmembrane transporter activity"/>
    <property type="evidence" value="ECO:0000318"/>
    <property type="project" value="GO_Central"/>
</dbReference>
<dbReference type="GO" id="GO:0042910">
    <property type="term" value="F:xenobiotic transmembrane transporter activity"/>
    <property type="evidence" value="ECO:0007669"/>
    <property type="project" value="InterPro"/>
</dbReference>
<dbReference type="GO" id="GO:0015721">
    <property type="term" value="P:bile acid and bile salt transport"/>
    <property type="evidence" value="ECO:0000318"/>
    <property type="project" value="GO_Central"/>
</dbReference>
<dbReference type="GO" id="GO:0046677">
    <property type="term" value="P:response to antibiotic"/>
    <property type="evidence" value="ECO:0007669"/>
    <property type="project" value="UniProtKB-KW"/>
</dbReference>
<dbReference type="GO" id="GO:1990961">
    <property type="term" value="P:xenobiotic detoxification by transmembrane export across the plasma membrane"/>
    <property type="evidence" value="ECO:0000318"/>
    <property type="project" value="GO_Central"/>
</dbReference>
<dbReference type="FunFam" id="2.40.30.170:FF:000003">
    <property type="entry name" value="Multidrug resistance protein A"/>
    <property type="match status" value="1"/>
</dbReference>
<dbReference type="Gene3D" id="2.40.30.170">
    <property type="match status" value="1"/>
</dbReference>
<dbReference type="Gene3D" id="2.40.50.100">
    <property type="match status" value="1"/>
</dbReference>
<dbReference type="InterPro" id="IPR043602">
    <property type="entry name" value="CusB-like_dom_1"/>
</dbReference>
<dbReference type="InterPro" id="IPR032317">
    <property type="entry name" value="CusB_D23"/>
</dbReference>
<dbReference type="InterPro" id="IPR050739">
    <property type="entry name" value="MFP"/>
</dbReference>
<dbReference type="InterPro" id="IPR005694">
    <property type="entry name" value="MFP_proteobact"/>
</dbReference>
<dbReference type="NCBIfam" id="TIGR00998">
    <property type="entry name" value="8a0101"/>
    <property type="match status" value="1"/>
</dbReference>
<dbReference type="PANTHER" id="PTHR30386">
    <property type="entry name" value="MEMBRANE FUSION SUBUNIT OF EMRAB-TOLC MULTIDRUG EFFLUX PUMP"/>
    <property type="match status" value="1"/>
</dbReference>
<dbReference type="PANTHER" id="PTHR30386:SF19">
    <property type="entry name" value="MULTIDRUG EXPORT PROTEIN EMRA-RELATED"/>
    <property type="match status" value="1"/>
</dbReference>
<dbReference type="Pfam" id="PF00529">
    <property type="entry name" value="CusB_dom_1"/>
    <property type="match status" value="1"/>
</dbReference>
<dbReference type="Pfam" id="PF16576">
    <property type="entry name" value="HlyD_D23"/>
    <property type="match status" value="1"/>
</dbReference>
<dbReference type="SUPFAM" id="SSF111369">
    <property type="entry name" value="HlyD-like secretion proteins"/>
    <property type="match status" value="1"/>
</dbReference>
<reference key="1">
    <citation type="journal article" date="1995" name="Science">
        <title>Whole-genome random sequencing and assembly of Haemophilus influenzae Rd.</title>
        <authorList>
            <person name="Fleischmann R.D."/>
            <person name="Adams M.D."/>
            <person name="White O."/>
            <person name="Clayton R.A."/>
            <person name="Kirkness E.F."/>
            <person name="Kerlavage A.R."/>
            <person name="Bult C.J."/>
            <person name="Tomb J.-F."/>
            <person name="Dougherty B.A."/>
            <person name="Merrick J.M."/>
            <person name="McKenney K."/>
            <person name="Sutton G.G."/>
            <person name="FitzHugh W."/>
            <person name="Fields C.A."/>
            <person name="Gocayne J.D."/>
            <person name="Scott J.D."/>
            <person name="Shirley R."/>
            <person name="Liu L.-I."/>
            <person name="Glodek A."/>
            <person name="Kelley J.M."/>
            <person name="Weidman J.F."/>
            <person name="Phillips C.A."/>
            <person name="Spriggs T."/>
            <person name="Hedblom E."/>
            <person name="Cotton M.D."/>
            <person name="Utterback T.R."/>
            <person name="Hanna M.C."/>
            <person name="Nguyen D.T."/>
            <person name="Saudek D.M."/>
            <person name="Brandon R.C."/>
            <person name="Fine L.D."/>
            <person name="Fritchman J.L."/>
            <person name="Fuhrmann J.L."/>
            <person name="Geoghagen N.S.M."/>
            <person name="Gnehm C.L."/>
            <person name="McDonald L.A."/>
            <person name="Small K.V."/>
            <person name="Fraser C.M."/>
            <person name="Smith H.O."/>
            <person name="Venter J.C."/>
        </authorList>
    </citation>
    <scope>NUCLEOTIDE SEQUENCE [LARGE SCALE GENOMIC DNA]</scope>
    <source>
        <strain>ATCC 51907 / DSM 11121 / KW20 / Rd</strain>
    </source>
</reference>
<name>EMRA_HAEIN</name>
<gene>
    <name type="primary">emrA</name>
    <name type="ordered locus">HI_0898</name>
</gene>
<keyword id="KW-0046">Antibiotic resistance</keyword>
<keyword id="KW-0997">Cell inner membrane</keyword>
<keyword id="KW-1003">Cell membrane</keyword>
<keyword id="KW-0175">Coiled coil</keyword>
<keyword id="KW-0472">Membrane</keyword>
<keyword id="KW-1185">Reference proteome</keyword>
<keyword id="KW-0812">Transmembrane</keyword>
<keyword id="KW-1133">Transmembrane helix</keyword>
<keyword id="KW-0813">Transport</keyword>
<accession>P44928</accession>
<proteinExistence type="inferred from homology"/>
<comment type="function">
    <text evidence="1">Confers resistance to antibiotics.</text>
</comment>
<comment type="subcellular location">
    <subcellularLocation>
        <location evidence="1">Cell inner membrane</location>
        <topology evidence="1">Single-pass membrane protein</topology>
        <orientation evidence="1">Periplasmic side</orientation>
    </subcellularLocation>
</comment>
<comment type="similarity">
    <text evidence="3">Belongs to the membrane fusion protein (MFP) (TC 8.A.1) family.</text>
</comment>
<organism>
    <name type="scientific">Haemophilus influenzae (strain ATCC 51907 / DSM 11121 / KW20 / Rd)</name>
    <dbReference type="NCBI Taxonomy" id="71421"/>
    <lineage>
        <taxon>Bacteria</taxon>
        <taxon>Pseudomonadati</taxon>
        <taxon>Pseudomonadota</taxon>
        <taxon>Gammaproteobacteria</taxon>
        <taxon>Pasteurellales</taxon>
        <taxon>Pasteurellaceae</taxon>
        <taxon>Haemophilus</taxon>
    </lineage>
</organism>
<feature type="chain" id="PRO_0000201870" description="Multidrug export protein EmrA">
    <location>
        <begin position="1"/>
        <end position="390"/>
    </location>
</feature>
<feature type="topological domain" description="Cytoplasmic" evidence="2">
    <location>
        <begin position="1"/>
        <end position="25"/>
    </location>
</feature>
<feature type="transmembrane region" description="Helical" evidence="2">
    <location>
        <begin position="26"/>
        <end position="46"/>
    </location>
</feature>
<feature type="topological domain" description="Periplasmic" evidence="2">
    <location>
        <begin position="47"/>
        <end position="390"/>
    </location>
</feature>
<feature type="coiled-coil region" evidence="2">
    <location>
        <begin position="160"/>
        <end position="190"/>
    </location>
</feature>
<sequence length="390" mass="43062">MTQIATENPSTKSVSNKTDRKKGLSIFILLLLIIGIACALYWFFFLKDFEETEDAYVGGNQVMVSSQVAGNVAKINADNMDKVHAGDILVELDDTNAKLSFEQAKSNLANAVRQVEQLGFTVQQLQSAVHANEISLAQAQGNLARRVQLEKMGAIDKESFQHAKEAVELAKANLNASKNQLAANQALLRNVPLREQPQIQNAINSLKQAWLNLQRTKIRSPIDGYVARRNVQVGQAVSVGGALMAVVSNEQMWLEANFKETQLTNMRIGQPVKIHFDLYGKNKEFDGVINGIEMGTGNAFSLLPSQNATGNWIKVVQRVPVRIKLDPQQFTETPLRIGLSATAKVRISDSSGAMLREKTEPKTLFSTDTLKYDESAVENLIESIIQQNSH</sequence>
<evidence type="ECO:0000250" key="1"/>
<evidence type="ECO:0000255" key="2"/>
<evidence type="ECO:0000305" key="3"/>